<dbReference type="EC" id="2.1.1.17" evidence="11"/>
<dbReference type="EC" id="2.1.1.71" evidence="11"/>
<dbReference type="EMBL" id="U25051">
    <property type="protein sequence ID" value="AAA67686.1"/>
    <property type="molecule type" value="Genomic_DNA"/>
</dbReference>
<dbReference type="EMBL" id="U25046">
    <property type="protein sequence ID" value="AAA67686.1"/>
    <property type="status" value="JOINED"/>
    <property type="molecule type" value="Genomic_DNA"/>
</dbReference>
<dbReference type="EMBL" id="U25047">
    <property type="protein sequence ID" value="AAA67686.1"/>
    <property type="status" value="JOINED"/>
    <property type="molecule type" value="Genomic_DNA"/>
</dbReference>
<dbReference type="EMBL" id="U25048">
    <property type="protein sequence ID" value="AAA67686.1"/>
    <property type="status" value="JOINED"/>
    <property type="molecule type" value="Genomic_DNA"/>
</dbReference>
<dbReference type="EMBL" id="U25049">
    <property type="protein sequence ID" value="AAA67686.1"/>
    <property type="status" value="JOINED"/>
    <property type="molecule type" value="Genomic_DNA"/>
</dbReference>
<dbReference type="EMBL" id="U25050">
    <property type="protein sequence ID" value="AAA67686.1"/>
    <property type="status" value="JOINED"/>
    <property type="molecule type" value="Genomic_DNA"/>
</dbReference>
<dbReference type="EMBL" id="AY334571">
    <property type="protein sequence ID" value="AAQ01190.1"/>
    <property type="status" value="ALT_FRAME"/>
    <property type="molecule type" value="mRNA"/>
</dbReference>
<dbReference type="EMBL" id="AK133744">
    <property type="protein sequence ID" value="BAE21818.1"/>
    <property type="molecule type" value="mRNA"/>
</dbReference>
<dbReference type="EMBL" id="AL603710">
    <property type="status" value="NOT_ANNOTATED_CDS"/>
    <property type="molecule type" value="Genomic_DNA"/>
</dbReference>
<dbReference type="EMBL" id="AL645526">
    <property type="status" value="NOT_ANNOTATED_CDS"/>
    <property type="molecule type" value="Genomic_DNA"/>
</dbReference>
<dbReference type="EMBL" id="BC026796">
    <property type="protein sequence ID" value="AAH26796.1"/>
    <property type="molecule type" value="mRNA"/>
</dbReference>
<dbReference type="CCDS" id="CCDS24782.1">
    <molecule id="Q61907-1"/>
</dbReference>
<dbReference type="CCDS" id="CCDS78957.1">
    <molecule id="Q61907-2"/>
</dbReference>
<dbReference type="RefSeq" id="NP_001276940.1">
    <molecule id="Q61907-2"/>
    <property type="nucleotide sequence ID" value="NM_001290011.1"/>
</dbReference>
<dbReference type="RefSeq" id="NP_001276941.1">
    <molecule id="Q61907-1"/>
    <property type="nucleotide sequence ID" value="NM_001290012.1"/>
</dbReference>
<dbReference type="RefSeq" id="NP_001276942.1">
    <molecule id="Q61907-1"/>
    <property type="nucleotide sequence ID" value="NM_001290013.1"/>
</dbReference>
<dbReference type="RefSeq" id="NP_001276943.1">
    <property type="nucleotide sequence ID" value="NM_001290014.1"/>
</dbReference>
<dbReference type="RefSeq" id="NP_032845.2">
    <molecule id="Q61907-1"/>
    <property type="nucleotide sequence ID" value="NM_008819.3"/>
</dbReference>
<dbReference type="FunCoup" id="Q61907">
    <property type="interactions" value="321"/>
</dbReference>
<dbReference type="IntAct" id="Q61907">
    <property type="interactions" value="2"/>
</dbReference>
<dbReference type="MINT" id="Q61907"/>
<dbReference type="STRING" id="10090.ENSMUSP00000099754"/>
<dbReference type="SwissPalm" id="Q61907"/>
<dbReference type="jPOST" id="Q61907"/>
<dbReference type="PaxDb" id="10090-ENSMUSP00000099753"/>
<dbReference type="ProteomicsDB" id="288124">
    <molecule id="Q61907-1"/>
</dbReference>
<dbReference type="ProteomicsDB" id="288125">
    <molecule id="Q61907-2"/>
</dbReference>
<dbReference type="Antibodypedia" id="25461">
    <property type="antibodies" value="178 antibodies from 24 providers"/>
</dbReference>
<dbReference type="DNASU" id="18618"/>
<dbReference type="Ensembl" id="ENSMUST00000000310.14">
    <molecule id="Q61907-1"/>
    <property type="protein sequence ID" value="ENSMUSP00000000310.8"/>
    <property type="gene ID" value="ENSMUSG00000000301.17"/>
</dbReference>
<dbReference type="Ensembl" id="ENSMUST00000102692.10">
    <molecule id="Q61907-1"/>
    <property type="protein sequence ID" value="ENSMUSP00000099753.4"/>
    <property type="gene ID" value="ENSMUSG00000000301.17"/>
</dbReference>
<dbReference type="Ensembl" id="ENSMUST00000102693.9">
    <molecule id="Q61907-2"/>
    <property type="protein sequence ID" value="ENSMUSP00000099754.3"/>
    <property type="gene ID" value="ENSMUSG00000000301.17"/>
</dbReference>
<dbReference type="GeneID" id="18618"/>
<dbReference type="KEGG" id="mmu:18618"/>
<dbReference type="UCSC" id="uc007jfi.2">
    <molecule id="Q61907-1"/>
    <property type="organism name" value="mouse"/>
</dbReference>
<dbReference type="UCSC" id="uc007jfj.2">
    <molecule id="Q61907-2"/>
    <property type="organism name" value="mouse"/>
</dbReference>
<dbReference type="AGR" id="MGI:104535"/>
<dbReference type="CTD" id="10400"/>
<dbReference type="MGI" id="MGI:104535">
    <property type="gene designation" value="Pemt"/>
</dbReference>
<dbReference type="VEuPathDB" id="HostDB:ENSMUSG00000000301"/>
<dbReference type="eggNOG" id="KOG4142">
    <property type="taxonomic scope" value="Eukaryota"/>
</dbReference>
<dbReference type="GeneTree" id="ENSGT00390000007041"/>
<dbReference type="HOGENOM" id="CLU_086119_0_1_1"/>
<dbReference type="InParanoid" id="Q61907"/>
<dbReference type="OMA" id="PTFWNIA"/>
<dbReference type="OrthoDB" id="46452at9989"/>
<dbReference type="TreeFam" id="TF300198"/>
<dbReference type="BRENDA" id="2.1.1.17">
    <property type="organism ID" value="3474"/>
</dbReference>
<dbReference type="Reactome" id="R-MMU-1483191">
    <property type="pathway name" value="Synthesis of PC"/>
</dbReference>
<dbReference type="UniPathway" id="UPA00753"/>
<dbReference type="BioGRID-ORCS" id="18618">
    <property type="hits" value="1 hit in 79 CRISPR screens"/>
</dbReference>
<dbReference type="ChiTaRS" id="Pemt">
    <property type="organism name" value="mouse"/>
</dbReference>
<dbReference type="PRO" id="PR:Q61907"/>
<dbReference type="Proteomes" id="UP000000589">
    <property type="component" value="Chromosome 11"/>
</dbReference>
<dbReference type="RNAct" id="Q61907">
    <property type="molecule type" value="protein"/>
</dbReference>
<dbReference type="Bgee" id="ENSMUSG00000000301">
    <property type="expression patterns" value="Expressed in morula and 98 other cell types or tissues"/>
</dbReference>
<dbReference type="ExpressionAtlas" id="Q61907">
    <property type="expression patterns" value="baseline and differential"/>
</dbReference>
<dbReference type="GO" id="GO:0005829">
    <property type="term" value="C:cytosol"/>
    <property type="evidence" value="ECO:0007669"/>
    <property type="project" value="Ensembl"/>
</dbReference>
<dbReference type="GO" id="GO:0005789">
    <property type="term" value="C:endoplasmic reticulum membrane"/>
    <property type="evidence" value="ECO:0000314"/>
    <property type="project" value="MGI"/>
</dbReference>
<dbReference type="GO" id="GO:0005740">
    <property type="term" value="C:mitochondrial envelope"/>
    <property type="evidence" value="ECO:0000304"/>
    <property type="project" value="MGI"/>
</dbReference>
<dbReference type="GO" id="GO:0031966">
    <property type="term" value="C:mitochondrial membrane"/>
    <property type="evidence" value="ECO:0007669"/>
    <property type="project" value="UniProtKB-SubCell"/>
</dbReference>
<dbReference type="GO" id="GO:0005739">
    <property type="term" value="C:mitochondrion"/>
    <property type="evidence" value="ECO:0007005"/>
    <property type="project" value="MGI"/>
</dbReference>
<dbReference type="GO" id="GO:0000773">
    <property type="term" value="F:phosphatidyl-N-methylethanolamine N-methyltransferase activity"/>
    <property type="evidence" value="ECO:0007669"/>
    <property type="project" value="UniProtKB-UniRule"/>
</dbReference>
<dbReference type="GO" id="GO:0004608">
    <property type="term" value="F:phosphatidylethanolamine N-methyltransferase activity"/>
    <property type="evidence" value="ECO:0000250"/>
    <property type="project" value="MGI"/>
</dbReference>
<dbReference type="GO" id="GO:0008757">
    <property type="term" value="F:S-adenosylmethionine-dependent methyltransferase activity"/>
    <property type="evidence" value="ECO:0000315"/>
    <property type="project" value="MGI"/>
</dbReference>
<dbReference type="GO" id="GO:0001835">
    <property type="term" value="P:blastocyst hatching"/>
    <property type="evidence" value="ECO:0000315"/>
    <property type="project" value="MGI"/>
</dbReference>
<dbReference type="GO" id="GO:0032259">
    <property type="term" value="P:methylation"/>
    <property type="evidence" value="ECO:0007669"/>
    <property type="project" value="UniProtKB-KW"/>
</dbReference>
<dbReference type="GO" id="GO:0006656">
    <property type="term" value="P:phosphatidylcholine biosynthetic process"/>
    <property type="evidence" value="ECO:0000250"/>
    <property type="project" value="MGI"/>
</dbReference>
<dbReference type="GO" id="GO:0120162">
    <property type="term" value="P:positive regulation of cold-induced thermogenesis"/>
    <property type="evidence" value="ECO:0000315"/>
    <property type="project" value="YuBioLab"/>
</dbReference>
<dbReference type="GO" id="GO:0006686">
    <property type="term" value="P:sphingomyelin biosynthetic process"/>
    <property type="evidence" value="ECO:0000315"/>
    <property type="project" value="MGI"/>
</dbReference>
<dbReference type="FunFam" id="1.20.120.1630:FF:000005">
    <property type="entry name" value="Phosphatidylethanolamine N-methyltransferase"/>
    <property type="match status" value="1"/>
</dbReference>
<dbReference type="Gene3D" id="1.20.120.1630">
    <property type="match status" value="1"/>
</dbReference>
<dbReference type="HAMAP" id="MF_03216">
    <property type="entry name" value="PLMT"/>
    <property type="match status" value="1"/>
</dbReference>
<dbReference type="InterPro" id="IPR024960">
    <property type="entry name" value="PEMT/MFAP"/>
</dbReference>
<dbReference type="InterPro" id="IPR007318">
    <property type="entry name" value="Phopholipid_MeTrfase"/>
</dbReference>
<dbReference type="PANTHER" id="PTHR15458">
    <property type="entry name" value="PHOSPHATIDYLETHANOLAMINE N-METHYLTRANSFERASE"/>
    <property type="match status" value="1"/>
</dbReference>
<dbReference type="PANTHER" id="PTHR15458:SF5">
    <property type="entry name" value="PHOSPHATIDYLETHANOLAMINE N-METHYLTRANSFERASE"/>
    <property type="match status" value="1"/>
</dbReference>
<dbReference type="Pfam" id="PF04191">
    <property type="entry name" value="PEMT"/>
    <property type="match status" value="1"/>
</dbReference>
<dbReference type="PIRSF" id="PIRSF005444">
    <property type="entry name" value="PEMT"/>
    <property type="match status" value="1"/>
</dbReference>
<dbReference type="PROSITE" id="PS51599">
    <property type="entry name" value="SAM_PEMT_PEM2"/>
    <property type="match status" value="1"/>
</dbReference>
<proteinExistence type="evidence at protein level"/>
<reference key="1">
    <citation type="journal article" date="1996" name="J. Lipid Res.">
        <title>Characterization of the murine phosphatidylethanolamine N-methyltransferase-2 gene.</title>
        <authorList>
            <person name="Walkey C.J."/>
            <person name="Cui Z."/>
            <person name="Agellon L.B."/>
            <person name="Vance D.E."/>
        </authorList>
    </citation>
    <scope>NUCLEOTIDE SEQUENCE [GENOMIC DNA]</scope>
    <source>
        <strain>129/J</strain>
        <tissue>Liver</tissue>
    </source>
</reference>
<reference key="2">
    <citation type="submission" date="2003-07" db="EMBL/GenBank/DDBJ databases">
        <title>Cloning of Mus musculus phosphatidylethanolamine N-methyltransferase (Pemt).</title>
        <authorList>
            <person name="Zhou G."/>
            <person name="Yu L."/>
            <person name="Zhao S."/>
        </authorList>
    </citation>
    <scope>NUCLEOTIDE SEQUENCE [MRNA] (ISOFORM 1)</scope>
    <source>
        <strain>C57BL/6J</strain>
        <tissue>Liver</tissue>
    </source>
</reference>
<reference key="3">
    <citation type="journal article" date="2005" name="Science">
        <title>The transcriptional landscape of the mammalian genome.</title>
        <authorList>
            <person name="Carninci P."/>
            <person name="Kasukawa T."/>
            <person name="Katayama S."/>
            <person name="Gough J."/>
            <person name="Frith M.C."/>
            <person name="Maeda N."/>
            <person name="Oyama R."/>
            <person name="Ravasi T."/>
            <person name="Lenhard B."/>
            <person name="Wells C."/>
            <person name="Kodzius R."/>
            <person name="Shimokawa K."/>
            <person name="Bajic V.B."/>
            <person name="Brenner S.E."/>
            <person name="Batalov S."/>
            <person name="Forrest A.R."/>
            <person name="Zavolan M."/>
            <person name="Davis M.J."/>
            <person name="Wilming L.G."/>
            <person name="Aidinis V."/>
            <person name="Allen J.E."/>
            <person name="Ambesi-Impiombato A."/>
            <person name="Apweiler R."/>
            <person name="Aturaliya R.N."/>
            <person name="Bailey T.L."/>
            <person name="Bansal M."/>
            <person name="Baxter L."/>
            <person name="Beisel K.W."/>
            <person name="Bersano T."/>
            <person name="Bono H."/>
            <person name="Chalk A.M."/>
            <person name="Chiu K.P."/>
            <person name="Choudhary V."/>
            <person name="Christoffels A."/>
            <person name="Clutterbuck D.R."/>
            <person name="Crowe M.L."/>
            <person name="Dalla E."/>
            <person name="Dalrymple B.P."/>
            <person name="de Bono B."/>
            <person name="Della Gatta G."/>
            <person name="di Bernardo D."/>
            <person name="Down T."/>
            <person name="Engstrom P."/>
            <person name="Fagiolini M."/>
            <person name="Faulkner G."/>
            <person name="Fletcher C.F."/>
            <person name="Fukushima T."/>
            <person name="Furuno M."/>
            <person name="Futaki S."/>
            <person name="Gariboldi M."/>
            <person name="Georgii-Hemming P."/>
            <person name="Gingeras T.R."/>
            <person name="Gojobori T."/>
            <person name="Green R.E."/>
            <person name="Gustincich S."/>
            <person name="Harbers M."/>
            <person name="Hayashi Y."/>
            <person name="Hensch T.K."/>
            <person name="Hirokawa N."/>
            <person name="Hill D."/>
            <person name="Huminiecki L."/>
            <person name="Iacono M."/>
            <person name="Ikeo K."/>
            <person name="Iwama A."/>
            <person name="Ishikawa T."/>
            <person name="Jakt M."/>
            <person name="Kanapin A."/>
            <person name="Katoh M."/>
            <person name="Kawasawa Y."/>
            <person name="Kelso J."/>
            <person name="Kitamura H."/>
            <person name="Kitano H."/>
            <person name="Kollias G."/>
            <person name="Krishnan S.P."/>
            <person name="Kruger A."/>
            <person name="Kummerfeld S.K."/>
            <person name="Kurochkin I.V."/>
            <person name="Lareau L.F."/>
            <person name="Lazarevic D."/>
            <person name="Lipovich L."/>
            <person name="Liu J."/>
            <person name="Liuni S."/>
            <person name="McWilliam S."/>
            <person name="Madan Babu M."/>
            <person name="Madera M."/>
            <person name="Marchionni L."/>
            <person name="Matsuda H."/>
            <person name="Matsuzawa S."/>
            <person name="Miki H."/>
            <person name="Mignone F."/>
            <person name="Miyake S."/>
            <person name="Morris K."/>
            <person name="Mottagui-Tabar S."/>
            <person name="Mulder N."/>
            <person name="Nakano N."/>
            <person name="Nakauchi H."/>
            <person name="Ng P."/>
            <person name="Nilsson R."/>
            <person name="Nishiguchi S."/>
            <person name="Nishikawa S."/>
            <person name="Nori F."/>
            <person name="Ohara O."/>
            <person name="Okazaki Y."/>
            <person name="Orlando V."/>
            <person name="Pang K.C."/>
            <person name="Pavan W.J."/>
            <person name="Pavesi G."/>
            <person name="Pesole G."/>
            <person name="Petrovsky N."/>
            <person name="Piazza S."/>
            <person name="Reed J."/>
            <person name="Reid J.F."/>
            <person name="Ring B.Z."/>
            <person name="Ringwald M."/>
            <person name="Rost B."/>
            <person name="Ruan Y."/>
            <person name="Salzberg S.L."/>
            <person name="Sandelin A."/>
            <person name="Schneider C."/>
            <person name="Schoenbach C."/>
            <person name="Sekiguchi K."/>
            <person name="Semple C.A."/>
            <person name="Seno S."/>
            <person name="Sessa L."/>
            <person name="Sheng Y."/>
            <person name="Shibata Y."/>
            <person name="Shimada H."/>
            <person name="Shimada K."/>
            <person name="Silva D."/>
            <person name="Sinclair B."/>
            <person name="Sperling S."/>
            <person name="Stupka E."/>
            <person name="Sugiura K."/>
            <person name="Sultana R."/>
            <person name="Takenaka Y."/>
            <person name="Taki K."/>
            <person name="Tammoja K."/>
            <person name="Tan S.L."/>
            <person name="Tang S."/>
            <person name="Taylor M.S."/>
            <person name="Tegner J."/>
            <person name="Teichmann S.A."/>
            <person name="Ueda H.R."/>
            <person name="van Nimwegen E."/>
            <person name="Verardo R."/>
            <person name="Wei C.L."/>
            <person name="Yagi K."/>
            <person name="Yamanishi H."/>
            <person name="Zabarovsky E."/>
            <person name="Zhu S."/>
            <person name="Zimmer A."/>
            <person name="Hide W."/>
            <person name="Bult C."/>
            <person name="Grimmond S.M."/>
            <person name="Teasdale R.D."/>
            <person name="Liu E.T."/>
            <person name="Brusic V."/>
            <person name="Quackenbush J."/>
            <person name="Wahlestedt C."/>
            <person name="Mattick J.S."/>
            <person name="Hume D.A."/>
            <person name="Kai C."/>
            <person name="Sasaki D."/>
            <person name="Tomaru Y."/>
            <person name="Fukuda S."/>
            <person name="Kanamori-Katayama M."/>
            <person name="Suzuki M."/>
            <person name="Aoki J."/>
            <person name="Arakawa T."/>
            <person name="Iida J."/>
            <person name="Imamura K."/>
            <person name="Itoh M."/>
            <person name="Kato T."/>
            <person name="Kawaji H."/>
            <person name="Kawagashira N."/>
            <person name="Kawashima T."/>
            <person name="Kojima M."/>
            <person name="Kondo S."/>
            <person name="Konno H."/>
            <person name="Nakano K."/>
            <person name="Ninomiya N."/>
            <person name="Nishio T."/>
            <person name="Okada M."/>
            <person name="Plessy C."/>
            <person name="Shibata K."/>
            <person name="Shiraki T."/>
            <person name="Suzuki S."/>
            <person name="Tagami M."/>
            <person name="Waki K."/>
            <person name="Watahiki A."/>
            <person name="Okamura-Oho Y."/>
            <person name="Suzuki H."/>
            <person name="Kawai J."/>
            <person name="Hayashizaki Y."/>
        </authorList>
    </citation>
    <scope>NUCLEOTIDE SEQUENCE [LARGE SCALE MRNA] (ISOFORM 2)</scope>
    <source>
        <strain>C57BL/6J</strain>
    </source>
</reference>
<reference key="4">
    <citation type="journal article" date="2009" name="PLoS Biol.">
        <title>Lineage-specific biology revealed by a finished genome assembly of the mouse.</title>
        <authorList>
            <person name="Church D.M."/>
            <person name="Goodstadt L."/>
            <person name="Hillier L.W."/>
            <person name="Zody M.C."/>
            <person name="Goldstein S."/>
            <person name="She X."/>
            <person name="Bult C.J."/>
            <person name="Agarwala R."/>
            <person name="Cherry J.L."/>
            <person name="DiCuccio M."/>
            <person name="Hlavina W."/>
            <person name="Kapustin Y."/>
            <person name="Meric P."/>
            <person name="Maglott D."/>
            <person name="Birtle Z."/>
            <person name="Marques A.C."/>
            <person name="Graves T."/>
            <person name="Zhou S."/>
            <person name="Teague B."/>
            <person name="Potamousis K."/>
            <person name="Churas C."/>
            <person name="Place M."/>
            <person name="Herschleb J."/>
            <person name="Runnheim R."/>
            <person name="Forrest D."/>
            <person name="Amos-Landgraf J."/>
            <person name="Schwartz D.C."/>
            <person name="Cheng Z."/>
            <person name="Lindblad-Toh K."/>
            <person name="Eichler E.E."/>
            <person name="Ponting C.P."/>
        </authorList>
    </citation>
    <scope>NUCLEOTIDE SEQUENCE [LARGE SCALE GENOMIC DNA]</scope>
    <source>
        <strain>C57BL/6J</strain>
    </source>
</reference>
<reference key="5">
    <citation type="journal article" date="2004" name="Genome Res.">
        <title>The status, quality, and expansion of the NIH full-length cDNA project: the Mammalian Gene Collection (MGC).</title>
        <authorList>
            <consortium name="The MGC Project Team"/>
        </authorList>
    </citation>
    <scope>NUCLEOTIDE SEQUENCE [LARGE SCALE MRNA] (ISOFORM 1)</scope>
    <source>
        <strain>FVB/N</strain>
        <tissue>Liver</tissue>
    </source>
</reference>
<reference key="6">
    <citation type="journal article" date="1997" name="Proc. Natl. Acad. Sci. U.S.A.">
        <title>Disruption of the murine gene encoding phosphatidylethanolamine N-methyltransferase.</title>
        <authorList>
            <person name="Walkey C.J."/>
            <person name="Donohue L.R."/>
            <person name="Bronson R."/>
            <person name="Agellon L.B."/>
            <person name="Vance D.E."/>
        </authorList>
    </citation>
    <scope>FUNCTION</scope>
    <scope>CATALYTIC ACTIVITY</scope>
    <scope>PATHWAY</scope>
</reference>
<reference key="7">
    <citation type="journal article" date="1998" name="J. Biol. Chem.">
        <title>Biochemical and evolutionary significance of phospholipid methylation.</title>
        <authorList>
            <person name="Walkey C.J."/>
            <person name="Yu L."/>
            <person name="Agellon L.B."/>
            <person name="Vance D.E."/>
        </authorList>
    </citation>
    <scope>FUNCTION</scope>
    <scope>TISSUE SPECIFICITY</scope>
    <scope>DISRUPTION PHENOTYPE</scope>
</reference>
<reference key="8">
    <citation type="journal article" date="2003" name="J. Biol. Chem.">
        <title>Plasma homocysteine is regulated by phospholipid methylation.</title>
        <authorList>
            <person name="Noga A.A."/>
            <person name="Stead L.M."/>
            <person name="Zhao Y."/>
            <person name="Brosnan M.E."/>
            <person name="Brosnan J.T."/>
            <person name="Vance D.E."/>
        </authorList>
    </citation>
    <scope>FUNCTION</scope>
    <scope>DISRUPTION PHENOTYPE</scope>
</reference>
<reference key="9">
    <citation type="journal article" date="2010" name="Cell">
        <title>A tissue-specific atlas of mouse protein phosphorylation and expression.</title>
        <authorList>
            <person name="Huttlin E.L."/>
            <person name="Jedrychowski M.P."/>
            <person name="Elias J.E."/>
            <person name="Goswami T."/>
            <person name="Rad R."/>
            <person name="Beausoleil S.A."/>
            <person name="Villen J."/>
            <person name="Haas W."/>
            <person name="Sowa M.E."/>
            <person name="Gygi S.P."/>
        </authorList>
    </citation>
    <scope>IDENTIFICATION BY MASS SPECTROMETRY [LARGE SCALE ANALYSIS]</scope>
    <source>
        <tissue>Liver</tissue>
    </source>
</reference>
<comment type="function">
    <text evidence="5 12">Catalyzes the three sequential steps of the methylation pathway for the biosynthesis of phosphatidylcholine, a critical and essential component for membrane structure (Probable) (PubMed:9371769). Uses S-adenosylmethionine (S-adenosyl-L-methionine, SAM or AdoMet) as the methyl group donor for the methylation of phosphatidylethanolamine (1,2-diacyl-sn-glycero-3-phosphoethanolamine, PE) to phosphatidylmonomethylethanolamine (1,2-diacyl-sn-glycero-3-phospho-N-methylethanolamine, PMME), PMME to phosphatidyldimethylethanolamine (1,2-diacyl-sn-glycero-3-phospho-N,N-dimethylethanolamine, PDME), and PDME to phosphatidylcholine (1,2-diacyl-sn-glycero-3-phosphocholine, PC), producing S-adenosyl-L-homocysteine in each step (PubMed:9371769).</text>
</comment>
<comment type="catalytic activity">
    <reaction evidence="11">
        <text>a 1,2-diacyl-sn-glycero-3-phospho-N-methylethanolamine + S-adenosyl-L-methionine = a 1,2-diacyl-sn-glycero-3-phospho-N,N-dimethylethanolamine + S-adenosyl-L-homocysteine + H(+)</text>
        <dbReference type="Rhea" id="RHEA:32735"/>
        <dbReference type="ChEBI" id="CHEBI:15378"/>
        <dbReference type="ChEBI" id="CHEBI:57856"/>
        <dbReference type="ChEBI" id="CHEBI:59789"/>
        <dbReference type="ChEBI" id="CHEBI:64572"/>
        <dbReference type="ChEBI" id="CHEBI:64573"/>
        <dbReference type="EC" id="2.1.1.71"/>
    </reaction>
    <physiologicalReaction direction="left-to-right" evidence="11">
        <dbReference type="Rhea" id="RHEA:32736"/>
    </physiologicalReaction>
</comment>
<comment type="catalytic activity">
    <reaction evidence="11">
        <text>a 1,2-diacyl-sn-glycero-3-phospho-N,N-dimethylethanolamine + S-adenosyl-L-methionine = a 1,2-diacyl-sn-glycero-3-phosphocholine + S-adenosyl-L-homocysteine + H(+)</text>
        <dbReference type="Rhea" id="RHEA:32739"/>
        <dbReference type="ChEBI" id="CHEBI:15378"/>
        <dbReference type="ChEBI" id="CHEBI:57643"/>
        <dbReference type="ChEBI" id="CHEBI:57856"/>
        <dbReference type="ChEBI" id="CHEBI:59789"/>
        <dbReference type="ChEBI" id="CHEBI:64572"/>
        <dbReference type="EC" id="2.1.1.71"/>
    </reaction>
    <physiologicalReaction direction="left-to-right" evidence="11">
        <dbReference type="Rhea" id="RHEA:32740"/>
    </physiologicalReaction>
</comment>
<comment type="catalytic activity">
    <reaction evidence="11">
        <text>a 1,2-diacyl-sn-glycero-3-phosphoethanolamine + S-adenosyl-L-methionine = a 1,2-diacyl-sn-glycero-3-phospho-N-methylethanolamine + S-adenosyl-L-homocysteine + H(+)</text>
        <dbReference type="Rhea" id="RHEA:11164"/>
        <dbReference type="ChEBI" id="CHEBI:15378"/>
        <dbReference type="ChEBI" id="CHEBI:57856"/>
        <dbReference type="ChEBI" id="CHEBI:59789"/>
        <dbReference type="ChEBI" id="CHEBI:64573"/>
        <dbReference type="ChEBI" id="CHEBI:64612"/>
        <dbReference type="EC" id="2.1.1.17"/>
    </reaction>
    <physiologicalReaction direction="left-to-right" evidence="11">
        <dbReference type="Rhea" id="RHEA:11165"/>
    </physiologicalReaction>
</comment>
<comment type="catalytic activity">
    <reaction evidence="1">
        <text>1,2-di-(9Z-octadecenoyl)-sn-glycero-3-phosphoethanolamine + S-adenosyl-L-methionine = 1,2-di-(9Z-octadecenoyl)-sn-glycero-3-phospho-N-methylethanolamine + S-adenosyl-L-homocysteine + H(+)</text>
        <dbReference type="Rhea" id="RHEA:70619"/>
        <dbReference type="ChEBI" id="CHEBI:15378"/>
        <dbReference type="ChEBI" id="CHEBI:57856"/>
        <dbReference type="ChEBI" id="CHEBI:59789"/>
        <dbReference type="ChEBI" id="CHEBI:74986"/>
        <dbReference type="ChEBI" id="CHEBI:85679"/>
    </reaction>
    <physiologicalReaction direction="left-to-right" evidence="1">
        <dbReference type="Rhea" id="RHEA:70620"/>
    </physiologicalReaction>
</comment>
<comment type="catalytic activity">
    <reaction evidence="1">
        <text>1,2-di-(9Z-octadecenoyl)-sn-glycero-3-phospho-N-methylethanolamine + S-adenosyl-L-methionine = 1,2-di-(9Z-octadecenoyl)-sn-glycero-3-phospho-N,N-dimethylethanolamine + S-adenosyl-L-homocysteine + H(+)</text>
        <dbReference type="Rhea" id="RHEA:46112"/>
        <dbReference type="ChEBI" id="CHEBI:15378"/>
        <dbReference type="ChEBI" id="CHEBI:57856"/>
        <dbReference type="ChEBI" id="CHEBI:59789"/>
        <dbReference type="ChEBI" id="CHEBI:85679"/>
        <dbReference type="ChEBI" id="CHEBI:85680"/>
    </reaction>
    <physiologicalReaction direction="left-to-right" evidence="1">
        <dbReference type="Rhea" id="RHEA:46113"/>
    </physiologicalReaction>
</comment>
<comment type="catalytic activity">
    <reaction evidence="1">
        <text>1,2-di-(9Z-octadecenoyl)-sn-glycero-3-phospho-N,N-dimethylethanolamine + S-adenosyl-L-methionine = 1,2-di-(9Z-octadecenoyl)-sn-glycero-3-phosphocholine + S-adenosyl-L-homocysteine + H(+)</text>
        <dbReference type="Rhea" id="RHEA:70623"/>
        <dbReference type="ChEBI" id="CHEBI:15378"/>
        <dbReference type="ChEBI" id="CHEBI:57856"/>
        <dbReference type="ChEBI" id="CHEBI:59789"/>
        <dbReference type="ChEBI" id="CHEBI:74669"/>
        <dbReference type="ChEBI" id="CHEBI:85680"/>
    </reaction>
    <physiologicalReaction direction="left-to-right" evidence="1">
        <dbReference type="Rhea" id="RHEA:70624"/>
    </physiologicalReaction>
</comment>
<comment type="catalytic activity">
    <reaction evidence="1">
        <text>1,2-di-(9Z,12Z-octadecadienoyl)-sn-glycero-3-phosphoethanolamine + S-adenosyl-L-methionine = 1,2-di-(9Z,12Z-octadecadienoyl)-sn-glycero-3-phospho-N-methylethanolamine + S-adenosyl-L-homocysteine + H(+)</text>
        <dbReference type="Rhea" id="RHEA:70739"/>
        <dbReference type="ChEBI" id="CHEBI:15378"/>
        <dbReference type="ChEBI" id="CHEBI:57856"/>
        <dbReference type="ChEBI" id="CHEBI:59789"/>
        <dbReference type="ChEBI" id="CHEBI:172403"/>
        <dbReference type="ChEBI" id="CHEBI:189848"/>
    </reaction>
    <physiologicalReaction direction="left-to-right" evidence="1">
        <dbReference type="Rhea" id="RHEA:70740"/>
    </physiologicalReaction>
</comment>
<comment type="catalytic activity">
    <reaction evidence="1">
        <text>1,2-di-(9Z,12Z-octadecadienoyl)-sn-glycero-3-phospho-N-methylethanolamine + S-adenosyl-L-methionine = 1,2-di-(9Z,12Z-octadecadienoyl)-sn-glycero-3-phospho-N,N-dimethylethanolamine + S-adenosyl-L-homocysteine + H(+)</text>
        <dbReference type="Rhea" id="RHEA:70743"/>
        <dbReference type="ChEBI" id="CHEBI:15378"/>
        <dbReference type="ChEBI" id="CHEBI:57856"/>
        <dbReference type="ChEBI" id="CHEBI:59789"/>
        <dbReference type="ChEBI" id="CHEBI:189848"/>
        <dbReference type="ChEBI" id="CHEBI:189849"/>
    </reaction>
    <physiologicalReaction direction="left-to-right" evidence="1">
        <dbReference type="Rhea" id="RHEA:70744"/>
    </physiologicalReaction>
</comment>
<comment type="catalytic activity">
    <reaction evidence="1">
        <text>1,2-di-(9Z,12Z-octadecadienoyl)-sn-glycero-3-phospho-N,N-dimethylethanolamine + S-adenosyl-L-methionine = 1,2-di-(9Z,12Z-octadecadienoyl)-sn-glycero-3-phosphocholine + S-adenosyl-L-homocysteine + H(+)</text>
        <dbReference type="Rhea" id="RHEA:70747"/>
        <dbReference type="ChEBI" id="CHEBI:15378"/>
        <dbReference type="ChEBI" id="CHEBI:42027"/>
        <dbReference type="ChEBI" id="CHEBI:57856"/>
        <dbReference type="ChEBI" id="CHEBI:59789"/>
        <dbReference type="ChEBI" id="CHEBI:189849"/>
    </reaction>
    <physiologicalReaction direction="left-to-right" evidence="1">
        <dbReference type="Rhea" id="RHEA:70748"/>
    </physiologicalReaction>
</comment>
<comment type="catalytic activity">
    <reaction evidence="1">
        <text>1,2-di-(9Z,12Z,15Z-octadecatrienoyl)-sn-glycero-3-phosphoethanolamine + S-adenosyl-L-methionine = 1,2-di-(9Z,12Z,15Z-octadecatrienoyl)-sn-glycero-3-phospho-N-methylethanolamine + S-adenosyl-L-homocysteine + H(+)</text>
        <dbReference type="Rhea" id="RHEA:70751"/>
        <dbReference type="ChEBI" id="CHEBI:15378"/>
        <dbReference type="ChEBI" id="CHEBI:57856"/>
        <dbReference type="ChEBI" id="CHEBI:59789"/>
        <dbReference type="ChEBI" id="CHEBI:189858"/>
        <dbReference type="ChEBI" id="CHEBI:189859"/>
    </reaction>
    <physiologicalReaction direction="left-to-right" evidence="1">
        <dbReference type="Rhea" id="RHEA:70752"/>
    </physiologicalReaction>
</comment>
<comment type="catalytic activity">
    <reaction evidence="1">
        <text>1,2-di-(9Z,12Z,15Z-octadecatrienoyl)-sn-glycero-3-phospho-N-methylethanolamine + S-adenosyl-L-methionine = 1,2-di-(9Z,12Z,15Z-octadecatrienoyl)-sn-glycero-3-phospho-N,N-dimethylethanolamine + S-adenosyl-L-homocysteine + H(+)</text>
        <dbReference type="Rhea" id="RHEA:70755"/>
        <dbReference type="ChEBI" id="CHEBI:15378"/>
        <dbReference type="ChEBI" id="CHEBI:57856"/>
        <dbReference type="ChEBI" id="CHEBI:59789"/>
        <dbReference type="ChEBI" id="CHEBI:189859"/>
        <dbReference type="ChEBI" id="CHEBI:189860"/>
    </reaction>
    <physiologicalReaction direction="left-to-right" evidence="1">
        <dbReference type="Rhea" id="RHEA:70756"/>
    </physiologicalReaction>
</comment>
<comment type="catalytic activity">
    <reaction evidence="1">
        <text>1,2-di-(9Z,12Z,15Z-octadecatrienoyl)-sn-glycero-3-phospho-N,N-dimethylethanolamine + S-adenosyl-L-methionine = 1,2-di-(9Z,12Z,15Z-octadecatrienoyl)-sn-glycero-3-phosphocholine + S-adenosyl-L-homocysteine + H(+)</text>
        <dbReference type="Rhea" id="RHEA:70759"/>
        <dbReference type="ChEBI" id="CHEBI:15378"/>
        <dbReference type="ChEBI" id="CHEBI:57856"/>
        <dbReference type="ChEBI" id="CHEBI:59789"/>
        <dbReference type="ChEBI" id="CHEBI:86161"/>
        <dbReference type="ChEBI" id="CHEBI:189860"/>
    </reaction>
    <physiologicalReaction direction="left-to-right" evidence="1">
        <dbReference type="Rhea" id="RHEA:70760"/>
    </physiologicalReaction>
</comment>
<comment type="catalytic activity">
    <reaction evidence="1">
        <text>1-hexadecanoyl-2-(4Z,7Z,10Z,13Z,16Z,19Z-docosahexaenoyl)-sn-glycero-3-phosphoethanolamine + S-adenosyl-L-methionine = 1-hexadecanoyl-2-(4Z,7Z,10Z,13Z,16Z,19Z-docosahexaenoyl)-sn-glycero-3-phospho-N-methylethanolamine + S-adenosyl-L-homocysteine + H(+)</text>
        <dbReference type="Rhea" id="RHEA:70763"/>
        <dbReference type="ChEBI" id="CHEBI:15378"/>
        <dbReference type="ChEBI" id="CHEBI:57856"/>
        <dbReference type="ChEBI" id="CHEBI:59789"/>
        <dbReference type="ChEBI" id="CHEBI:78261"/>
        <dbReference type="ChEBI" id="CHEBI:189861"/>
    </reaction>
    <physiologicalReaction direction="left-to-right" evidence="1">
        <dbReference type="Rhea" id="RHEA:70764"/>
    </physiologicalReaction>
</comment>
<comment type="catalytic activity">
    <reaction evidence="1">
        <text>1-hexadecanoyl-2-(4Z,7Z,10Z,13Z,16Z,19Z-docosahexaenoyl)-sn-glycero-3-phospho-N-methylethanolamine + S-adenosyl-L-methionine = 1-hexadecanoyl-2-(4Z,7Z,10Z,13Z,16Z,19Z-docosahexaenoyl)-sn-glycero-3-phospho-N,N-dimethylethanolamine + S-adenosyl-L-homocysteine + H(+)</text>
        <dbReference type="Rhea" id="RHEA:70767"/>
        <dbReference type="ChEBI" id="CHEBI:15378"/>
        <dbReference type="ChEBI" id="CHEBI:57856"/>
        <dbReference type="ChEBI" id="CHEBI:59789"/>
        <dbReference type="ChEBI" id="CHEBI:189861"/>
        <dbReference type="ChEBI" id="CHEBI:189862"/>
    </reaction>
    <physiologicalReaction direction="left-to-right" evidence="1">
        <dbReference type="Rhea" id="RHEA:70768"/>
    </physiologicalReaction>
</comment>
<comment type="catalytic activity">
    <reaction evidence="1">
        <text>1-hexadecanoyl-2-(4Z,7Z,10Z,13Z,16Z,19Z-docosahexaenoyl)-sn-glycero-3-phospho-N,N-dimethylethanolamine + S-adenosyl-L-methionine = 1-hexadecanoyl-2-(4Z,7Z,10Z,13Z,16Z,19Z-docosahexaenoyl)-sn-glycero-3-phosphocholine + S-adenosyl-L-homocysteine + H(+)</text>
        <dbReference type="Rhea" id="RHEA:70771"/>
        <dbReference type="ChEBI" id="CHEBI:15378"/>
        <dbReference type="ChEBI" id="CHEBI:57856"/>
        <dbReference type="ChEBI" id="CHEBI:59789"/>
        <dbReference type="ChEBI" id="CHEBI:74963"/>
        <dbReference type="ChEBI" id="CHEBI:189862"/>
    </reaction>
    <physiologicalReaction direction="left-to-right" evidence="1">
        <dbReference type="Rhea" id="RHEA:70772"/>
    </physiologicalReaction>
</comment>
<comment type="pathway">
    <text evidence="11">Phospholipid metabolism; phosphatidylcholine biosynthesis.</text>
</comment>
<comment type="subcellular location">
    <subcellularLocation>
        <location evidence="2">Endoplasmic reticulum membrane</location>
        <topology evidence="3">Multi-pass membrane protein</topology>
    </subcellularLocation>
    <subcellularLocation>
        <location evidence="3">Mitochondrion membrane</location>
        <topology evidence="3">Multi-pass membrane protein</topology>
    </subcellularLocation>
    <text evidence="2">Found in endoplasmic reticulum where most PEMT activity is generated and in mitochondria.</text>
</comment>
<comment type="alternative products">
    <event type="alternative splicing"/>
    <isoform>
        <id>Q61907-1</id>
        <name>1</name>
        <sequence type="displayed"/>
    </isoform>
    <isoform>
        <id>Q61907-2</id>
        <name>2</name>
        <sequence type="described" ref="VSP_053224"/>
    </isoform>
</comment>
<comment type="tissue specificity">
    <text evidence="11 12">Expressed in liver (at protein level).</text>
</comment>
<comment type="disruption phenotype">
    <text evidence="4 6">Severe liver pathology rapidly occurs in knockout mice after 3-days withdrawal of dietary choline, which might occur during starvation, pregnancy or lactation, and may die after 4-5 days (PubMed:9765216). Homocysteine plasma content in knockouts is 50 percent less of the content in wild type mice (PubMed:12482759).</text>
</comment>
<comment type="similarity">
    <text evidence="3">Belongs to the class VI-like SAM-binding methyltransferase superfamily. PEMT/PEM2 methyltransferase family.</text>
</comment>
<comment type="sequence caution" evidence="10">
    <conflict type="frameshift">
        <sequence resource="EMBL-CDS" id="AAQ01190"/>
    </conflict>
</comment>
<protein>
    <recommendedName>
        <fullName evidence="9">Phosphatidylethanolamine N-methyltransferase</fullName>
        <shortName evidence="3">PEAMT</shortName>
        <shortName evidence="7 9">PEMT</shortName>
        <ecNumber evidence="11">2.1.1.17</ecNumber>
        <ecNumber evidence="11">2.1.1.71</ecNumber>
    </recommendedName>
    <alternativeName>
        <fullName evidence="3">Phospholipid methyltransferase</fullName>
        <shortName evidence="3">PLMT</shortName>
    </alternativeName>
</protein>
<feature type="chain" id="PRO_0000193921" description="Phosphatidylethanolamine N-methyltransferase">
    <location>
        <begin position="1"/>
        <end position="199"/>
    </location>
</feature>
<feature type="topological domain" description="Lumenal" evidence="3">
    <location>
        <begin position="1"/>
        <end position="12"/>
    </location>
</feature>
<feature type="intramembrane region" description="Helical" evidence="3">
    <location>
        <begin position="13"/>
        <end position="33"/>
    </location>
</feature>
<feature type="topological domain" description="Lumenal" evidence="3">
    <location>
        <begin position="34"/>
        <end position="45"/>
    </location>
</feature>
<feature type="transmembrane region" description="Helical" evidence="3">
    <location>
        <begin position="46"/>
        <end position="66"/>
    </location>
</feature>
<feature type="topological domain" description="Cytoplasmic" evidence="3">
    <location>
        <begin position="67"/>
        <end position="93"/>
    </location>
</feature>
<feature type="transmembrane region" description="Helical" evidence="3">
    <location>
        <begin position="94"/>
        <end position="114"/>
    </location>
</feature>
<feature type="topological domain" description="Lumenal" evidence="3">
    <location>
        <begin position="115"/>
        <end position="157"/>
    </location>
</feature>
<feature type="transmembrane region" description="Helical" evidence="3">
    <location>
        <begin position="158"/>
        <end position="178"/>
    </location>
</feature>
<feature type="topological domain" description="Cytoplasmic" evidence="3">
    <location>
        <begin position="179"/>
        <end position="199"/>
    </location>
</feature>
<feature type="binding site" evidence="3">
    <location>
        <begin position="98"/>
        <end position="100"/>
    </location>
    <ligand>
        <name>S-adenosyl-L-methionine</name>
        <dbReference type="ChEBI" id="CHEBI:59789"/>
    </ligand>
</feature>
<feature type="binding site" evidence="3">
    <location>
        <begin position="180"/>
        <end position="181"/>
    </location>
    <ligand>
        <name>S-adenosyl-L-methionine</name>
        <dbReference type="ChEBI" id="CHEBI:59789"/>
    </ligand>
</feature>
<feature type="splice variant" id="VSP_053224" description="In isoform 2." evidence="8">
    <original>M</original>
    <variation>MEENTSPTTALISSSVAGHDCCGGFGNIDFRQADLFVM</variation>
    <location>
        <position position="1"/>
    </location>
</feature>
<feature type="sequence conflict" description="In Ref. 1; AAA67686." evidence="10" ref="1">
    <original>L</original>
    <variation>V</variation>
    <location>
        <position position="168"/>
    </location>
</feature>
<feature type="sequence conflict" description="In Ref. 1; AAA67686." evidence="10" ref="1">
    <original>Y</original>
    <variation>N</variation>
    <location>
        <position position="173"/>
    </location>
</feature>
<organism>
    <name type="scientific">Mus musculus</name>
    <name type="common">Mouse</name>
    <dbReference type="NCBI Taxonomy" id="10090"/>
    <lineage>
        <taxon>Eukaryota</taxon>
        <taxon>Metazoa</taxon>
        <taxon>Chordata</taxon>
        <taxon>Craniata</taxon>
        <taxon>Vertebrata</taxon>
        <taxon>Euteleostomi</taxon>
        <taxon>Mammalia</taxon>
        <taxon>Eutheria</taxon>
        <taxon>Euarchontoglires</taxon>
        <taxon>Glires</taxon>
        <taxon>Rodentia</taxon>
        <taxon>Myomorpha</taxon>
        <taxon>Muroidea</taxon>
        <taxon>Muridae</taxon>
        <taxon>Murinae</taxon>
        <taxon>Mus</taxon>
        <taxon>Mus</taxon>
    </lineage>
</organism>
<sequence>MSWLLGYMDPTEPSFVAAVITIVFNPLFWNVVARWEQRTRKLSRAFGSPHLACYSLGICILLLNILRSHCFTQAMMSQPKMEGLDNHTTYFLGLAFLGWGFVFVLSSFYALGFTGTFLGDYFGILKESRVTTFPFSVLDNPMYWGSTANYLGWALMHASPTGLLLTVLVAIVYVVALLYEEPFTAEIYRQKATRLHKRS</sequence>
<accession>Q61907</accession>
<accession>Q3UZN8</accession>
<accession>Q7TNW6</accession>
<accession>Q8R0I1</accession>
<evidence type="ECO:0000250" key="1">
    <source>
        <dbReference type="UniProtKB" id="Q08388"/>
    </source>
</evidence>
<evidence type="ECO:0000250" key="2">
    <source>
        <dbReference type="UniProtKB" id="Q9UBM1"/>
    </source>
</evidence>
<evidence type="ECO:0000255" key="3">
    <source>
        <dbReference type="HAMAP-Rule" id="MF_03216"/>
    </source>
</evidence>
<evidence type="ECO:0000269" key="4">
    <source>
    </source>
</evidence>
<evidence type="ECO:0000269" key="5">
    <source>
    </source>
</evidence>
<evidence type="ECO:0000269" key="6">
    <source>
    </source>
</evidence>
<evidence type="ECO:0000303" key="7">
    <source>
    </source>
</evidence>
<evidence type="ECO:0000303" key="8">
    <source>
    </source>
</evidence>
<evidence type="ECO:0000303" key="9">
    <source>
    </source>
</evidence>
<evidence type="ECO:0000305" key="10"/>
<evidence type="ECO:0000305" key="11">
    <source>
    </source>
</evidence>
<evidence type="ECO:0000305" key="12">
    <source>
    </source>
</evidence>
<keyword id="KW-0025">Alternative splicing</keyword>
<keyword id="KW-0256">Endoplasmic reticulum</keyword>
<keyword id="KW-0444">Lipid biosynthesis</keyword>
<keyword id="KW-0443">Lipid metabolism</keyword>
<keyword id="KW-0472">Membrane</keyword>
<keyword id="KW-0489">Methyltransferase</keyword>
<keyword id="KW-0496">Mitochondrion</keyword>
<keyword id="KW-0594">Phospholipid biosynthesis</keyword>
<keyword id="KW-1208">Phospholipid metabolism</keyword>
<keyword id="KW-1185">Reference proteome</keyword>
<keyword id="KW-0949">S-adenosyl-L-methionine</keyword>
<keyword id="KW-0808">Transferase</keyword>
<keyword id="KW-0812">Transmembrane</keyword>
<keyword id="KW-1133">Transmembrane helix</keyword>
<gene>
    <name evidence="3" type="primary">Pemt</name>
    <name type="synonym">Pempt</name>
    <name type="synonym">Pemt2</name>
</gene>
<name>PEMT_MOUSE</name>